<sequence length="291" mass="33074">MTSSYLHFPDFDPVIFSIGPVALHWYGLMYLVGFVFAMWLAVRRANRPGSGWTKNEVENLLYAGFLGVFLGGRIGYVLFYNFPLFLDNPLYLFRVWDGGMSFHGGLIGVILVMIIFARRTKRSFFQVSDFIAPLIPFGLGAGRLGNFINGELWGRVDPNFRFAMLFPGSRAEDIALLPSHPQWQPIFDTYGVLPRHPSQLYELALEGVVLFIILNLFIRKPRPMGAVSGLFLIGYGAFRIIVEFFRQPDAQFTGAWVQYISMGQILSIPMIIAGAIMMVWAYRRRPQQHVS</sequence>
<name>LGT_SALSV</name>
<proteinExistence type="inferred from homology"/>
<organism>
    <name type="scientific">Salmonella schwarzengrund (strain CVM19633)</name>
    <dbReference type="NCBI Taxonomy" id="439843"/>
    <lineage>
        <taxon>Bacteria</taxon>
        <taxon>Pseudomonadati</taxon>
        <taxon>Pseudomonadota</taxon>
        <taxon>Gammaproteobacteria</taxon>
        <taxon>Enterobacterales</taxon>
        <taxon>Enterobacteriaceae</taxon>
        <taxon>Salmonella</taxon>
    </lineage>
</organism>
<gene>
    <name evidence="1" type="primary">lgt</name>
    <name type="ordered locus">SeSA_A3166</name>
</gene>
<reference key="1">
    <citation type="journal article" date="2011" name="J. Bacteriol.">
        <title>Comparative genomics of 28 Salmonella enterica isolates: evidence for CRISPR-mediated adaptive sublineage evolution.</title>
        <authorList>
            <person name="Fricke W.F."/>
            <person name="Mammel M.K."/>
            <person name="McDermott P.F."/>
            <person name="Tartera C."/>
            <person name="White D.G."/>
            <person name="Leclerc J.E."/>
            <person name="Ravel J."/>
            <person name="Cebula T.A."/>
        </authorList>
    </citation>
    <scope>NUCLEOTIDE SEQUENCE [LARGE SCALE GENOMIC DNA]</scope>
    <source>
        <strain>CVM19633</strain>
    </source>
</reference>
<dbReference type="EC" id="2.5.1.145" evidence="1"/>
<dbReference type="EMBL" id="CP001127">
    <property type="protein sequence ID" value="ACF91071.1"/>
    <property type="molecule type" value="Genomic_DNA"/>
</dbReference>
<dbReference type="RefSeq" id="WP_000204647.1">
    <property type="nucleotide sequence ID" value="NC_011094.1"/>
</dbReference>
<dbReference type="SMR" id="B4TUM0"/>
<dbReference type="KEGG" id="sew:SeSA_A3166"/>
<dbReference type="HOGENOM" id="CLU_013386_1_0_6"/>
<dbReference type="UniPathway" id="UPA00664"/>
<dbReference type="Proteomes" id="UP000001865">
    <property type="component" value="Chromosome"/>
</dbReference>
<dbReference type="GO" id="GO:0005886">
    <property type="term" value="C:plasma membrane"/>
    <property type="evidence" value="ECO:0007669"/>
    <property type="project" value="UniProtKB-SubCell"/>
</dbReference>
<dbReference type="GO" id="GO:0008961">
    <property type="term" value="F:phosphatidylglycerol-prolipoprotein diacylglyceryl transferase activity"/>
    <property type="evidence" value="ECO:0007669"/>
    <property type="project" value="UniProtKB-UniRule"/>
</dbReference>
<dbReference type="GO" id="GO:0042158">
    <property type="term" value="P:lipoprotein biosynthetic process"/>
    <property type="evidence" value="ECO:0007669"/>
    <property type="project" value="UniProtKB-UniRule"/>
</dbReference>
<dbReference type="HAMAP" id="MF_01147">
    <property type="entry name" value="Lgt"/>
    <property type="match status" value="1"/>
</dbReference>
<dbReference type="InterPro" id="IPR001640">
    <property type="entry name" value="Lgt"/>
</dbReference>
<dbReference type="NCBIfam" id="TIGR00544">
    <property type="entry name" value="lgt"/>
    <property type="match status" value="1"/>
</dbReference>
<dbReference type="PANTHER" id="PTHR30589:SF0">
    <property type="entry name" value="PHOSPHATIDYLGLYCEROL--PROLIPOPROTEIN DIACYLGLYCERYL TRANSFERASE"/>
    <property type="match status" value="1"/>
</dbReference>
<dbReference type="PANTHER" id="PTHR30589">
    <property type="entry name" value="PROLIPOPROTEIN DIACYLGLYCERYL TRANSFERASE"/>
    <property type="match status" value="1"/>
</dbReference>
<dbReference type="Pfam" id="PF01790">
    <property type="entry name" value="LGT"/>
    <property type="match status" value="1"/>
</dbReference>
<dbReference type="PROSITE" id="PS01311">
    <property type="entry name" value="LGT"/>
    <property type="match status" value="1"/>
</dbReference>
<evidence type="ECO:0000255" key="1">
    <source>
        <dbReference type="HAMAP-Rule" id="MF_01147"/>
    </source>
</evidence>
<keyword id="KW-0997">Cell inner membrane</keyword>
<keyword id="KW-1003">Cell membrane</keyword>
<keyword id="KW-0472">Membrane</keyword>
<keyword id="KW-0808">Transferase</keyword>
<keyword id="KW-0812">Transmembrane</keyword>
<keyword id="KW-1133">Transmembrane helix</keyword>
<comment type="function">
    <text evidence="1">Catalyzes the transfer of the diacylglyceryl group from phosphatidylglycerol to the sulfhydryl group of the N-terminal cysteine of a prolipoprotein, the first step in the formation of mature lipoproteins.</text>
</comment>
<comment type="catalytic activity">
    <reaction evidence="1">
        <text>L-cysteinyl-[prolipoprotein] + a 1,2-diacyl-sn-glycero-3-phospho-(1'-sn-glycerol) = an S-1,2-diacyl-sn-glyceryl-L-cysteinyl-[prolipoprotein] + sn-glycerol 1-phosphate + H(+)</text>
        <dbReference type="Rhea" id="RHEA:56712"/>
        <dbReference type="Rhea" id="RHEA-COMP:14679"/>
        <dbReference type="Rhea" id="RHEA-COMP:14680"/>
        <dbReference type="ChEBI" id="CHEBI:15378"/>
        <dbReference type="ChEBI" id="CHEBI:29950"/>
        <dbReference type="ChEBI" id="CHEBI:57685"/>
        <dbReference type="ChEBI" id="CHEBI:64716"/>
        <dbReference type="ChEBI" id="CHEBI:140658"/>
        <dbReference type="EC" id="2.5.1.145"/>
    </reaction>
</comment>
<comment type="pathway">
    <text evidence="1">Protein modification; lipoprotein biosynthesis (diacylglyceryl transfer).</text>
</comment>
<comment type="subcellular location">
    <subcellularLocation>
        <location evidence="1">Cell inner membrane</location>
        <topology evidence="1">Multi-pass membrane protein</topology>
    </subcellularLocation>
</comment>
<comment type="similarity">
    <text evidence="1">Belongs to the Lgt family.</text>
</comment>
<accession>B4TUM0</accession>
<feature type="chain" id="PRO_1000137458" description="Phosphatidylglycerol--prolipoprotein diacylglyceryl transferase">
    <location>
        <begin position="1"/>
        <end position="291"/>
    </location>
</feature>
<feature type="transmembrane region" description="Helical" evidence="1">
    <location>
        <begin position="21"/>
        <end position="41"/>
    </location>
</feature>
<feature type="transmembrane region" description="Helical" evidence="1">
    <location>
        <begin position="60"/>
        <end position="80"/>
    </location>
</feature>
<feature type="transmembrane region" description="Helical" evidence="1">
    <location>
        <begin position="96"/>
        <end position="116"/>
    </location>
</feature>
<feature type="transmembrane region" description="Helical" evidence="1">
    <location>
        <begin position="130"/>
        <end position="150"/>
    </location>
</feature>
<feature type="transmembrane region" description="Helical" evidence="1">
    <location>
        <begin position="198"/>
        <end position="218"/>
    </location>
</feature>
<feature type="transmembrane region" description="Helical" evidence="1">
    <location>
        <begin position="225"/>
        <end position="245"/>
    </location>
</feature>
<feature type="transmembrane region" description="Helical" evidence="1">
    <location>
        <begin position="260"/>
        <end position="280"/>
    </location>
</feature>
<feature type="binding site" evidence="1">
    <location>
        <position position="143"/>
    </location>
    <ligand>
        <name>a 1,2-diacyl-sn-glycero-3-phospho-(1'-sn-glycerol)</name>
        <dbReference type="ChEBI" id="CHEBI:64716"/>
    </ligand>
</feature>
<protein>
    <recommendedName>
        <fullName evidence="1">Phosphatidylglycerol--prolipoprotein diacylglyceryl transferase</fullName>
        <ecNumber evidence="1">2.5.1.145</ecNumber>
    </recommendedName>
</protein>